<sequence length="872" mass="102946">MSRRNQKKPQAPIGNETNLDFVLQNLEVYKSQIEHYKTQQQQIKEEDLKLLKFKNQDQDGNSGNDDDDEENNSNKQQELLRRVNQIKQQVQLIKKVGSKVEKDLNLNEDENKKNGLSEQQVKEEQLRTITEEQVKYQNLVFNMDYQLDLNESGGHRRHRRETDYDTEKWFEISHDQKNYVSIYANQKTSYCWWLKDYFNKNNYDHLNVSINRLETEAEFYAFDDFSQTIKLTNNSYQTVNIDVNFDNNLCILALLRFLLSLERFNILNIRSSYTRNQYNFEKIGELLETIFAVVFSHRHLQGIHLQVPCEAFQYLVNSSSQISVKDSQLQVYSFSTDLKLVDTNKVQDYFKFLQEFPRLTHVSQQAIPVSATNAVENLNVLLKKVKHANLNLVSIPTQFNFDFYFVNLQHLKLEFGLEPNILTKQKLENLLLSIKQSKNLKFLRLNFYTYVAQETSRKQILKQATTIKNLKNNKNQEETPETKDETPSESTSGMKFFDHLSELTELEDFSVNLQATQEIYDSLHKLLIRSTNLKKFKLSYKYEMEKSKMDTFIDLKNIYETLNNLKRCSVNISNPHGNISYELTNKDSTFYKFKLTLNQELQHAKYTFKQNEFQFNNVKSAKIESSSLESLEDIDSLCKSIASCKNLQNVNIIASLLYPNNIQKNPFNKPNLLFFKQFEQLKNLENVSINCILDQHILNSISEFLEKNKKIKAFILKRYYLLQYYLDYTKLFKTLQQLPELNQVYINQQLEELTVSEVHKQVWENHKQKAFYEPLCEFIKESSQTLQLIDFDQNTVSDDSIKKILESISESKYHHYLRLNPSQSSSLIKSENEEIQELLKACDEKGVLVKAYYKFPLCLPTGTYYDYNSDRW</sequence>
<comment type="function">
    <text>Ribonucleoprotein DNA polymerase that catalyzes the de novo synthesis of telomeric simple sequence repeats. Subunit p95 contains some or all of the template-independent primer DNA-binding site termed the anchor site.</text>
</comment>
<comment type="catalytic activity">
    <reaction>
        <text>DNA(n) + a 2'-deoxyribonucleoside 5'-triphosphate = DNA(n+1) + diphosphate</text>
        <dbReference type="Rhea" id="RHEA:22508"/>
        <dbReference type="Rhea" id="RHEA-COMP:17339"/>
        <dbReference type="Rhea" id="RHEA-COMP:17340"/>
        <dbReference type="ChEBI" id="CHEBI:33019"/>
        <dbReference type="ChEBI" id="CHEBI:61560"/>
        <dbReference type="ChEBI" id="CHEBI:173112"/>
        <dbReference type="EC" id="2.7.7.49"/>
    </reaction>
</comment>
<comment type="subunit">
    <text>Telomerase consist of two subunit, p80 and p95 that form a 1:1:1 complex with the 159 nt telomerase RNA.</text>
</comment>
<comment type="subcellular location">
    <subcellularLocation>
        <location evidence="2">Nucleus</location>
    </subcellularLocation>
    <subcellularLocation>
        <location evidence="2">Chromosome</location>
        <location evidence="2">Telomere</location>
    </subcellularLocation>
</comment>
<proteinExistence type="evidence at protein level"/>
<accession>Q94819</accession>
<feature type="chain" id="PRO_0000072477" description="Telomerase component p95">
    <location>
        <begin position="1"/>
        <end position="872"/>
    </location>
</feature>
<feature type="region of interest" description="Disordered" evidence="1">
    <location>
        <begin position="55"/>
        <end position="75"/>
    </location>
</feature>
<feature type="region of interest" description="Disordered" evidence="1">
    <location>
        <begin position="471"/>
        <end position="492"/>
    </location>
</feature>
<feature type="compositionally biased region" description="Basic and acidic residues" evidence="1">
    <location>
        <begin position="474"/>
        <end position="486"/>
    </location>
</feature>
<organism>
    <name type="scientific">Tetrahymena thermophila</name>
    <dbReference type="NCBI Taxonomy" id="5911"/>
    <lineage>
        <taxon>Eukaryota</taxon>
        <taxon>Sar</taxon>
        <taxon>Alveolata</taxon>
        <taxon>Ciliophora</taxon>
        <taxon>Intramacronucleata</taxon>
        <taxon>Oligohymenophorea</taxon>
        <taxon>Hymenostomatida</taxon>
        <taxon>Tetrahymenina</taxon>
        <taxon>Tetrahymenidae</taxon>
        <taxon>Tetrahymena</taxon>
    </lineage>
</organism>
<protein>
    <recommendedName>
        <fullName>Telomerase component p95</fullName>
        <ecNumber>2.7.7.49</ecNumber>
    </recommendedName>
</protein>
<evidence type="ECO:0000256" key="1">
    <source>
        <dbReference type="SAM" id="MobiDB-lite"/>
    </source>
</evidence>
<evidence type="ECO:0000305" key="2"/>
<name>TE95_TETTH</name>
<dbReference type="EC" id="2.7.7.49"/>
<dbReference type="EMBL" id="U25642">
    <property type="protein sequence ID" value="AAC46602.1"/>
    <property type="molecule type" value="mRNA"/>
</dbReference>
<dbReference type="PIR" id="S55940">
    <property type="entry name" value="S55940"/>
</dbReference>
<dbReference type="SMR" id="Q94819"/>
<dbReference type="GO" id="GO:0000781">
    <property type="term" value="C:chromosome, telomeric region"/>
    <property type="evidence" value="ECO:0007669"/>
    <property type="project" value="UniProtKB-SubCell"/>
</dbReference>
<dbReference type="GO" id="GO:0005634">
    <property type="term" value="C:nucleus"/>
    <property type="evidence" value="ECO:0007669"/>
    <property type="project" value="UniProtKB-SubCell"/>
</dbReference>
<dbReference type="GO" id="GO:0003677">
    <property type="term" value="F:DNA binding"/>
    <property type="evidence" value="ECO:0007669"/>
    <property type="project" value="UniProtKB-KW"/>
</dbReference>
<dbReference type="GO" id="GO:0003964">
    <property type="term" value="F:RNA-directed DNA polymerase activity"/>
    <property type="evidence" value="ECO:0007669"/>
    <property type="project" value="UniProtKB-KW"/>
</dbReference>
<keyword id="KW-0158">Chromosome</keyword>
<keyword id="KW-0903">Direct protein sequencing</keyword>
<keyword id="KW-0238">DNA-binding</keyword>
<keyword id="KW-0548">Nucleotidyltransferase</keyword>
<keyword id="KW-0539">Nucleus</keyword>
<keyword id="KW-0695">RNA-directed DNA polymerase</keyword>
<keyword id="KW-0779">Telomere</keyword>
<keyword id="KW-0808">Transferase</keyword>
<reference key="1">
    <citation type="journal article" date="1995" name="Cell">
        <title>Purification of Tetrahymena telomerase and cloning of genes encoding the two protein components of the enzyme.</title>
        <authorList>
            <person name="Collins K."/>
            <person name="Kobayashi R."/>
            <person name="Greider C.W."/>
        </authorList>
    </citation>
    <scope>NUCLEOTIDE SEQUENCE [MRNA]</scope>
    <scope>PARTIAL PROTEIN SEQUENCE</scope>
</reference>